<organism>
    <name type="scientific">Mycoplasma pneumoniae (strain ATCC 29342 / M129 / Subtype 1)</name>
    <name type="common">Mycoplasmoides pneumoniae</name>
    <dbReference type="NCBI Taxonomy" id="272634"/>
    <lineage>
        <taxon>Bacteria</taxon>
        <taxon>Bacillati</taxon>
        <taxon>Mycoplasmatota</taxon>
        <taxon>Mycoplasmoidales</taxon>
        <taxon>Mycoplasmoidaceae</taxon>
        <taxon>Mycoplasmoides</taxon>
    </lineage>
</organism>
<evidence type="ECO:0000250" key="1"/>
<evidence type="ECO:0000255" key="2">
    <source>
        <dbReference type="PROSITE-ProRule" id="PRU00182"/>
    </source>
</evidence>
<evidence type="ECO:0000305" key="3"/>
<proteinExistence type="inferred from homology"/>
<accession>P75230</accession>
<comment type="catalytic activity">
    <reaction>
        <text>a uridine in RNA = a pseudouridine in RNA</text>
        <dbReference type="Rhea" id="RHEA:48348"/>
        <dbReference type="Rhea" id="RHEA-COMP:12068"/>
        <dbReference type="Rhea" id="RHEA-COMP:12069"/>
        <dbReference type="ChEBI" id="CHEBI:65314"/>
        <dbReference type="ChEBI" id="CHEBI:65315"/>
    </reaction>
</comment>
<comment type="similarity">
    <text evidence="3">Belongs to the pseudouridine synthase RluA family.</text>
</comment>
<feature type="chain" id="PRO_0000162742" description="Uncharacterized RNA pseudouridine synthase MG370 homolog">
    <location>
        <begin position="1"/>
        <end position="326"/>
    </location>
</feature>
<feature type="domain" description="S4 RNA-binding" evidence="2">
    <location>
        <begin position="15"/>
        <end position="76"/>
    </location>
</feature>
<feature type="active site" evidence="1">
    <location>
        <position position="147"/>
    </location>
</feature>
<gene>
    <name type="ordered locus">MPN_548</name>
    <name type="ORF">G12_orf326</name>
    <name type="ORF">MP294</name>
</gene>
<name>Y548_MYCPN</name>
<keyword id="KW-0413">Isomerase</keyword>
<keyword id="KW-1185">Reference proteome</keyword>
<keyword id="KW-0694">RNA-binding</keyword>
<reference key="1">
    <citation type="journal article" date="1996" name="Nucleic Acids Res.">
        <title>Complete sequence analysis of the genome of the bacterium Mycoplasma pneumoniae.</title>
        <authorList>
            <person name="Himmelreich R."/>
            <person name="Hilbert H."/>
            <person name="Plagens H."/>
            <person name="Pirkl E."/>
            <person name="Li B.-C."/>
            <person name="Herrmann R."/>
        </authorList>
    </citation>
    <scope>NUCLEOTIDE SEQUENCE [LARGE SCALE GENOMIC DNA]</scope>
    <source>
        <strain>ATCC 29342 / M129 / Subtype 1</strain>
    </source>
</reference>
<sequence>MSTAKFVVPKAVENVRIEKFCLKLLPNIKLSQFFKLLRLGKVLLNNTKAKLGQRVSSGDTIVFQFAIEPYLHNHSEVVDLTQVQDDLQVIFEDEQLIVVDKPAGVVCQPDAKHELFNLANSLLKHCGYNQYFKNSLSFIPRFAHRIDRNTCGLVIGAKTNQALQELEAVFRHNLLMKQYQGLVFGPFNFKGTQKAYWAKDAYQALVTVKAKPFPNAKPITTIFENSKYLTKLDLSLLTIRLVSGKTHQIRACLNLLNTQLVGDRKYQLLQFKNRNRDFKHQALHATNLSFAQLDKQKFPLLANYSQRQFKSQLVPWFASLIKGVSI</sequence>
<protein>
    <recommendedName>
        <fullName>Uncharacterized RNA pseudouridine synthase MG370 homolog</fullName>
        <ecNumber>5.4.99.-</ecNumber>
    </recommendedName>
    <alternativeName>
        <fullName>RNA pseudouridylate synthase</fullName>
    </alternativeName>
    <alternativeName>
        <fullName>RNA-uridine isomerase</fullName>
    </alternativeName>
</protein>
<dbReference type="EC" id="5.4.99.-"/>
<dbReference type="EMBL" id="U00089">
    <property type="protein sequence ID" value="AAB95942.1"/>
    <property type="molecule type" value="Genomic_DNA"/>
</dbReference>
<dbReference type="PIR" id="S73620">
    <property type="entry name" value="S73620"/>
</dbReference>
<dbReference type="RefSeq" id="NP_110237.1">
    <property type="nucleotide sequence ID" value="NC_000912.1"/>
</dbReference>
<dbReference type="RefSeq" id="WP_010874905.1">
    <property type="nucleotide sequence ID" value="NZ_OU342337.1"/>
</dbReference>
<dbReference type="SMR" id="P75230"/>
<dbReference type="STRING" id="272634.MPN_548"/>
<dbReference type="EnsemblBacteria" id="AAB95942">
    <property type="protein sequence ID" value="AAB95942"/>
    <property type="gene ID" value="MPN_548"/>
</dbReference>
<dbReference type="KEGG" id="mpn:MPN_548"/>
<dbReference type="PATRIC" id="fig|272634.6.peg.610"/>
<dbReference type="HOGENOM" id="CLU_016902_4_1_14"/>
<dbReference type="OrthoDB" id="9807829at2"/>
<dbReference type="BioCyc" id="MPNE272634:G1GJ3-903-MONOMER"/>
<dbReference type="Proteomes" id="UP000000808">
    <property type="component" value="Chromosome"/>
</dbReference>
<dbReference type="GO" id="GO:0003723">
    <property type="term" value="F:RNA binding"/>
    <property type="evidence" value="ECO:0007669"/>
    <property type="project" value="UniProtKB-KW"/>
</dbReference>
<dbReference type="GO" id="GO:0120159">
    <property type="term" value="F:rRNA pseudouridine synthase activity"/>
    <property type="evidence" value="ECO:0007669"/>
    <property type="project" value="UniProtKB-ARBA"/>
</dbReference>
<dbReference type="GO" id="GO:0000455">
    <property type="term" value="P:enzyme-directed rRNA pseudouridine synthesis"/>
    <property type="evidence" value="ECO:0007669"/>
    <property type="project" value="TreeGrafter"/>
</dbReference>
<dbReference type="CDD" id="cd02869">
    <property type="entry name" value="PseudoU_synth_RluA_like"/>
    <property type="match status" value="1"/>
</dbReference>
<dbReference type="Gene3D" id="3.30.2350.10">
    <property type="entry name" value="Pseudouridine synthase"/>
    <property type="match status" value="1"/>
</dbReference>
<dbReference type="Gene3D" id="3.10.290.10">
    <property type="entry name" value="RNA-binding S4 domain"/>
    <property type="match status" value="1"/>
</dbReference>
<dbReference type="InterPro" id="IPR020103">
    <property type="entry name" value="PsdUridine_synth_cat_dom_sf"/>
</dbReference>
<dbReference type="InterPro" id="IPR006224">
    <property type="entry name" value="PsdUridine_synth_RluA-like_CS"/>
</dbReference>
<dbReference type="InterPro" id="IPR006225">
    <property type="entry name" value="PsdUridine_synth_RluC/D"/>
</dbReference>
<dbReference type="InterPro" id="IPR006145">
    <property type="entry name" value="PsdUridine_synth_RsuA/RluA"/>
</dbReference>
<dbReference type="InterPro" id="IPR050188">
    <property type="entry name" value="RluA_PseudoU_synthase"/>
</dbReference>
<dbReference type="InterPro" id="IPR002942">
    <property type="entry name" value="S4_RNA-bd"/>
</dbReference>
<dbReference type="InterPro" id="IPR036986">
    <property type="entry name" value="S4_RNA-bd_sf"/>
</dbReference>
<dbReference type="NCBIfam" id="TIGR00005">
    <property type="entry name" value="rluA_subfam"/>
    <property type="match status" value="1"/>
</dbReference>
<dbReference type="PANTHER" id="PTHR21600">
    <property type="entry name" value="MITOCHONDRIAL RNA PSEUDOURIDINE SYNTHASE"/>
    <property type="match status" value="1"/>
</dbReference>
<dbReference type="PANTHER" id="PTHR21600:SF44">
    <property type="entry name" value="RIBOSOMAL LARGE SUBUNIT PSEUDOURIDINE SYNTHASE D"/>
    <property type="match status" value="1"/>
</dbReference>
<dbReference type="Pfam" id="PF00849">
    <property type="entry name" value="PseudoU_synth_2"/>
    <property type="match status" value="1"/>
</dbReference>
<dbReference type="Pfam" id="PF01479">
    <property type="entry name" value="S4"/>
    <property type="match status" value="1"/>
</dbReference>
<dbReference type="SMART" id="SM00363">
    <property type="entry name" value="S4"/>
    <property type="match status" value="1"/>
</dbReference>
<dbReference type="SUPFAM" id="SSF55120">
    <property type="entry name" value="Pseudouridine synthase"/>
    <property type="match status" value="1"/>
</dbReference>
<dbReference type="PROSITE" id="PS01129">
    <property type="entry name" value="PSI_RLU"/>
    <property type="match status" value="1"/>
</dbReference>
<dbReference type="PROSITE" id="PS50889">
    <property type="entry name" value="S4"/>
    <property type="match status" value="1"/>
</dbReference>